<keyword id="KW-0025">Alternative splicing</keyword>
<keyword id="KW-0963">Cytoplasm</keyword>
<keyword id="KW-0509">mRNA transport</keyword>
<keyword id="KW-0539">Nucleus</keyword>
<keyword id="KW-0597">Phosphoprotein</keyword>
<keyword id="KW-1185">Reference proteome</keyword>
<keyword id="KW-0677">Repeat</keyword>
<keyword id="KW-0694">RNA-binding</keyword>
<keyword id="KW-0810">Translation regulation</keyword>
<keyword id="KW-0813">Transport</keyword>
<dbReference type="EMBL" id="AY531659">
    <property type="protein sequence ID" value="AAT01428.1"/>
    <property type="molecule type" value="mRNA"/>
</dbReference>
<dbReference type="EMBL" id="AK170531">
    <property type="protein sequence ID" value="BAE41861.1"/>
    <property type="molecule type" value="mRNA"/>
</dbReference>
<dbReference type="EMBL" id="CT009567">
    <property type="status" value="NOT_ANNOTATED_CDS"/>
    <property type="molecule type" value="Genomic_DNA"/>
</dbReference>
<dbReference type="CCDS" id="CCDS49797.1">
    <molecule id="Q5SF07-1"/>
</dbReference>
<dbReference type="RefSeq" id="NP_898850.2">
    <molecule id="Q5SF07-1"/>
    <property type="nucleotide sequence ID" value="NM_183029.2"/>
</dbReference>
<dbReference type="SMR" id="Q5SF07"/>
<dbReference type="BioGRID" id="235510">
    <property type="interactions" value="16"/>
</dbReference>
<dbReference type="FunCoup" id="Q5SF07">
    <property type="interactions" value="1915"/>
</dbReference>
<dbReference type="IntAct" id="Q5SF07">
    <property type="interactions" value="1"/>
</dbReference>
<dbReference type="STRING" id="10090.ENSMUSP00000097629"/>
<dbReference type="GlyGen" id="Q5SF07">
    <property type="glycosylation" value="1 site, 1 O-linked glycan (1 site)"/>
</dbReference>
<dbReference type="iPTMnet" id="Q5SF07"/>
<dbReference type="PhosphoSitePlus" id="Q5SF07"/>
<dbReference type="REPRODUCTION-2DPAGE" id="Q5SF07"/>
<dbReference type="jPOST" id="Q5SF07"/>
<dbReference type="PaxDb" id="10090-ENSMUSP00000097629"/>
<dbReference type="PeptideAtlas" id="Q5SF07"/>
<dbReference type="ProteomicsDB" id="267092">
    <molecule id="Q5SF07-1"/>
</dbReference>
<dbReference type="ProteomicsDB" id="267093">
    <molecule id="Q5SF07-2"/>
</dbReference>
<dbReference type="Pumba" id="Q5SF07"/>
<dbReference type="Antibodypedia" id="33841">
    <property type="antibodies" value="643 antibodies from 41 providers"/>
</dbReference>
<dbReference type="DNASU" id="319765"/>
<dbReference type="Ensembl" id="ENSMUST00000100052.11">
    <molecule id="Q5SF07-1"/>
    <property type="protein sequence ID" value="ENSMUSP00000097629.5"/>
    <property type="gene ID" value="ENSMUSG00000033581.18"/>
</dbReference>
<dbReference type="GeneID" id="319765"/>
<dbReference type="KEGG" id="mmu:319765"/>
<dbReference type="UCSC" id="uc007yrz.1">
    <molecule id="Q5SF07-2"/>
    <property type="organism name" value="mouse"/>
</dbReference>
<dbReference type="UCSC" id="uc007ysa.1">
    <molecule id="Q5SF07-1"/>
    <property type="organism name" value="mouse"/>
</dbReference>
<dbReference type="AGR" id="MGI:1890358"/>
<dbReference type="CTD" id="10644"/>
<dbReference type="MGI" id="MGI:1890358">
    <property type="gene designation" value="Igf2bp2"/>
</dbReference>
<dbReference type="VEuPathDB" id="HostDB:ENSMUSG00000033581"/>
<dbReference type="eggNOG" id="KOG2193">
    <property type="taxonomic scope" value="Eukaryota"/>
</dbReference>
<dbReference type="GeneTree" id="ENSGT00940000154913"/>
<dbReference type="InParanoid" id="Q5SF07"/>
<dbReference type="OMA" id="HITFENH"/>
<dbReference type="OrthoDB" id="752362at2759"/>
<dbReference type="PhylomeDB" id="Q5SF07"/>
<dbReference type="TreeFam" id="TF320229"/>
<dbReference type="BioGRID-ORCS" id="319765">
    <property type="hits" value="3 hits in 78 CRISPR screens"/>
</dbReference>
<dbReference type="ChiTaRS" id="Igf2bp2">
    <property type="organism name" value="mouse"/>
</dbReference>
<dbReference type="PRO" id="PR:Q5SF07"/>
<dbReference type="Proteomes" id="UP000000589">
    <property type="component" value="Chromosome 16"/>
</dbReference>
<dbReference type="RNAct" id="Q5SF07">
    <property type="molecule type" value="protein"/>
</dbReference>
<dbReference type="Bgee" id="ENSMUSG00000033581">
    <property type="expression patterns" value="Expressed in metanephric ureteric bud and 193 other cell types or tissues"/>
</dbReference>
<dbReference type="ExpressionAtlas" id="Q5SF07">
    <property type="expression patterns" value="baseline and differential"/>
</dbReference>
<dbReference type="GO" id="GO:0005737">
    <property type="term" value="C:cytoplasm"/>
    <property type="evidence" value="ECO:0000250"/>
    <property type="project" value="UniProtKB"/>
</dbReference>
<dbReference type="GO" id="GO:0010494">
    <property type="term" value="C:cytoplasmic stress granule"/>
    <property type="evidence" value="ECO:0000250"/>
    <property type="project" value="UniProtKB"/>
</dbReference>
<dbReference type="GO" id="GO:0005856">
    <property type="term" value="C:cytoskeleton"/>
    <property type="evidence" value="ECO:0000250"/>
    <property type="project" value="UniProtKB"/>
</dbReference>
<dbReference type="GO" id="GO:0005829">
    <property type="term" value="C:cytosol"/>
    <property type="evidence" value="ECO:0007669"/>
    <property type="project" value="Ensembl"/>
</dbReference>
<dbReference type="GO" id="GO:0005634">
    <property type="term" value="C:nucleus"/>
    <property type="evidence" value="ECO:0000250"/>
    <property type="project" value="UniProtKB"/>
</dbReference>
<dbReference type="GO" id="GO:0000932">
    <property type="term" value="C:P-body"/>
    <property type="evidence" value="ECO:0000250"/>
    <property type="project" value="UniProtKB"/>
</dbReference>
<dbReference type="GO" id="GO:0003730">
    <property type="term" value="F:mRNA 3'-UTR binding"/>
    <property type="evidence" value="ECO:0000314"/>
    <property type="project" value="MGI"/>
</dbReference>
<dbReference type="GO" id="GO:0048027">
    <property type="term" value="F:mRNA 5'-UTR binding"/>
    <property type="evidence" value="ECO:0000314"/>
    <property type="project" value="MGI"/>
</dbReference>
<dbReference type="GO" id="GO:1990247">
    <property type="term" value="F:N6-methyladenosine-containing RNA reader activity"/>
    <property type="evidence" value="ECO:0000250"/>
    <property type="project" value="UniProtKB"/>
</dbReference>
<dbReference type="GO" id="GO:0045182">
    <property type="term" value="F:translation regulator activity"/>
    <property type="evidence" value="ECO:0000315"/>
    <property type="project" value="MGI"/>
</dbReference>
<dbReference type="GO" id="GO:0106106">
    <property type="term" value="P:cold-induced thermogenesis"/>
    <property type="evidence" value="ECO:0000315"/>
    <property type="project" value="MGI"/>
</dbReference>
<dbReference type="GO" id="GO:0070934">
    <property type="term" value="P:CRD-mediated mRNA stabilization"/>
    <property type="evidence" value="ECO:0000250"/>
    <property type="project" value="UniProtKB"/>
</dbReference>
<dbReference type="GO" id="GO:0097009">
    <property type="term" value="P:energy homeostasis"/>
    <property type="evidence" value="ECO:0000315"/>
    <property type="project" value="MGI"/>
</dbReference>
<dbReference type="GO" id="GO:0051028">
    <property type="term" value="P:mRNA transport"/>
    <property type="evidence" value="ECO:0007669"/>
    <property type="project" value="UniProtKB-KW"/>
</dbReference>
<dbReference type="GO" id="GO:0017148">
    <property type="term" value="P:negative regulation of translation"/>
    <property type="evidence" value="ECO:0000315"/>
    <property type="project" value="MGI"/>
</dbReference>
<dbReference type="CDD" id="cd22491">
    <property type="entry name" value="KH-I_IGF2BP2_rpt1"/>
    <property type="match status" value="1"/>
</dbReference>
<dbReference type="CDD" id="cd22497">
    <property type="entry name" value="KH-I_IGF2BP2_rpt3"/>
    <property type="match status" value="1"/>
</dbReference>
<dbReference type="CDD" id="cd22500">
    <property type="entry name" value="KH-I_IGF2BP2_rpt4"/>
    <property type="match status" value="1"/>
</dbReference>
<dbReference type="CDD" id="cd12626">
    <property type="entry name" value="RRM1_IGF2BP2"/>
    <property type="match status" value="1"/>
</dbReference>
<dbReference type="CDD" id="cd12629">
    <property type="entry name" value="RRM2_IGF2BP2"/>
    <property type="match status" value="1"/>
</dbReference>
<dbReference type="FunFam" id="3.30.310.210:FF:000001">
    <property type="entry name" value="insulin-like growth factor 2 mRNA-binding protein 1 isoform X1"/>
    <property type="match status" value="1"/>
</dbReference>
<dbReference type="FunFam" id="3.30.70.330:FF:000293">
    <property type="entry name" value="insulin-like growth factor 2 mRNA-binding protein 2 isoform X1"/>
    <property type="match status" value="1"/>
</dbReference>
<dbReference type="FunFam" id="3.30.1370.10:FF:000026">
    <property type="entry name" value="Insulin-like growth factor 2 mRNA-binding protein 3"/>
    <property type="match status" value="1"/>
</dbReference>
<dbReference type="FunFam" id="3.30.1370.10:FF:000027">
    <property type="entry name" value="insulin-like growth factor 2 mRNA-binding protein 3 isoform X1"/>
    <property type="match status" value="1"/>
</dbReference>
<dbReference type="Gene3D" id="3.30.310.210">
    <property type="match status" value="1"/>
</dbReference>
<dbReference type="Gene3D" id="3.30.70.330">
    <property type="match status" value="2"/>
</dbReference>
<dbReference type="Gene3D" id="3.30.1370.10">
    <property type="entry name" value="K Homology domain, type 1"/>
    <property type="match status" value="2"/>
</dbReference>
<dbReference type="InterPro" id="IPR034843">
    <property type="entry name" value="IGF2BP2_RRM1"/>
</dbReference>
<dbReference type="InterPro" id="IPR004087">
    <property type="entry name" value="KH_dom"/>
</dbReference>
<dbReference type="InterPro" id="IPR004088">
    <property type="entry name" value="KH_dom_type_1"/>
</dbReference>
<dbReference type="InterPro" id="IPR036612">
    <property type="entry name" value="KH_dom_type_1_sf"/>
</dbReference>
<dbReference type="InterPro" id="IPR012677">
    <property type="entry name" value="Nucleotide-bd_a/b_plait_sf"/>
</dbReference>
<dbReference type="InterPro" id="IPR035979">
    <property type="entry name" value="RBD_domain_sf"/>
</dbReference>
<dbReference type="InterPro" id="IPR000504">
    <property type="entry name" value="RRM_dom"/>
</dbReference>
<dbReference type="PANTHER" id="PTHR10288">
    <property type="entry name" value="KH DOMAIN CONTAINING RNA BINDING PROTEIN"/>
    <property type="match status" value="1"/>
</dbReference>
<dbReference type="Pfam" id="PF00013">
    <property type="entry name" value="KH_1"/>
    <property type="match status" value="4"/>
</dbReference>
<dbReference type="Pfam" id="PF00076">
    <property type="entry name" value="RRM_1"/>
    <property type="match status" value="2"/>
</dbReference>
<dbReference type="SMART" id="SM00322">
    <property type="entry name" value="KH"/>
    <property type="match status" value="4"/>
</dbReference>
<dbReference type="SMART" id="SM00360">
    <property type="entry name" value="RRM"/>
    <property type="match status" value="2"/>
</dbReference>
<dbReference type="SUPFAM" id="SSF54791">
    <property type="entry name" value="Eukaryotic type KH-domain (KH-domain type I)"/>
    <property type="match status" value="4"/>
</dbReference>
<dbReference type="SUPFAM" id="SSF54928">
    <property type="entry name" value="RNA-binding domain, RBD"/>
    <property type="match status" value="1"/>
</dbReference>
<dbReference type="PROSITE" id="PS50084">
    <property type="entry name" value="KH_TYPE_1"/>
    <property type="match status" value="4"/>
</dbReference>
<dbReference type="PROSITE" id="PS50102">
    <property type="entry name" value="RRM"/>
    <property type="match status" value="2"/>
</dbReference>
<protein>
    <recommendedName>
        <fullName>Insulin-like growth factor 2 mRNA-binding protein 2</fullName>
        <shortName>IGF2 mRNA-binding protein 2</shortName>
        <shortName>IMP-2</shortName>
    </recommendedName>
    <alternativeName>
        <fullName>IGF-II mRNA-binding protein 2</fullName>
    </alternativeName>
    <alternativeName>
        <fullName>VICKZ family member 2</fullName>
    </alternativeName>
</protein>
<evidence type="ECO:0000250" key="1"/>
<evidence type="ECO:0000250" key="2">
    <source>
        <dbReference type="UniProtKB" id="Q9Y6M1"/>
    </source>
</evidence>
<evidence type="ECO:0000255" key="3">
    <source>
        <dbReference type="PROSITE-ProRule" id="PRU00117"/>
    </source>
</evidence>
<evidence type="ECO:0000255" key="4">
    <source>
        <dbReference type="PROSITE-ProRule" id="PRU00176"/>
    </source>
</evidence>
<evidence type="ECO:0000256" key="5">
    <source>
        <dbReference type="SAM" id="MobiDB-lite"/>
    </source>
</evidence>
<evidence type="ECO:0000269" key="6">
    <source>
    </source>
</evidence>
<evidence type="ECO:0000269" key="7">
    <source>
    </source>
</evidence>
<evidence type="ECO:0000303" key="8">
    <source>
    </source>
</evidence>
<evidence type="ECO:0000305" key="9"/>
<evidence type="ECO:0007744" key="10">
    <source>
    </source>
</evidence>
<evidence type="ECO:0007744" key="11">
    <source>
    </source>
</evidence>
<accession>Q5SF07</accession>
<accession>A6X8Z4</accession>
<accession>Q3TCU4</accession>
<accession>Q7TQF9</accession>
<feature type="chain" id="PRO_0000244497" description="Insulin-like growth factor 2 mRNA-binding protein 2">
    <location>
        <begin position="1"/>
        <end position="592"/>
    </location>
</feature>
<feature type="domain" description="RRM 1" evidence="4">
    <location>
        <begin position="3"/>
        <end position="76"/>
    </location>
</feature>
<feature type="domain" description="RRM 2" evidence="4">
    <location>
        <begin position="82"/>
        <end position="157"/>
    </location>
</feature>
<feature type="domain" description="KH 1" evidence="3">
    <location>
        <begin position="186"/>
        <end position="251"/>
    </location>
</feature>
<feature type="domain" description="KH 2" evidence="3">
    <location>
        <begin position="267"/>
        <end position="334"/>
    </location>
</feature>
<feature type="domain" description="KH 3" evidence="3">
    <location>
        <begin position="420"/>
        <end position="485"/>
    </location>
</feature>
<feature type="domain" description="KH 4" evidence="3">
    <location>
        <begin position="502"/>
        <end position="568"/>
    </location>
</feature>
<feature type="region of interest" description="Disordered" evidence="5">
    <location>
        <begin position="157"/>
        <end position="182"/>
    </location>
</feature>
<feature type="modified residue" description="Phosphoserine" evidence="2">
    <location>
        <position position="11"/>
    </location>
</feature>
<feature type="modified residue" description="Phosphoserine" evidence="10 11">
    <location>
        <position position="162"/>
    </location>
</feature>
<feature type="modified residue" description="Phosphoserine" evidence="10 11">
    <location>
        <position position="164"/>
    </location>
</feature>
<feature type="modified residue" description="Phosphothreonine" evidence="11">
    <location>
        <position position="543"/>
    </location>
</feature>
<feature type="splice variant" id="VSP_019576" description="In isoform 2." evidence="8">
    <original>MMNKLYIGNLSPAVTADDLRQLFGDRKLPLAGQVLLKSGYAFVDYPDQNWAIRAIETLSGKVELHGKIMEVDYSVSKKL</original>
    <variation>MHPSQWPRYGAAGKPFS</variation>
    <location>
        <begin position="1"/>
        <end position="79"/>
    </location>
</feature>
<feature type="sequence conflict" description="In Ref. 2; BAE41861." evidence="9" ref="2">
    <original>I</original>
    <variation>V</variation>
    <location>
        <position position="568"/>
    </location>
</feature>
<name>IF2B2_MOUSE</name>
<organism>
    <name type="scientific">Mus musculus</name>
    <name type="common">Mouse</name>
    <dbReference type="NCBI Taxonomy" id="10090"/>
    <lineage>
        <taxon>Eukaryota</taxon>
        <taxon>Metazoa</taxon>
        <taxon>Chordata</taxon>
        <taxon>Craniata</taxon>
        <taxon>Vertebrata</taxon>
        <taxon>Euteleostomi</taxon>
        <taxon>Mammalia</taxon>
        <taxon>Eutheria</taxon>
        <taxon>Euarchontoglires</taxon>
        <taxon>Glires</taxon>
        <taxon>Rodentia</taxon>
        <taxon>Myomorpha</taxon>
        <taxon>Muroidea</taxon>
        <taxon>Muridae</taxon>
        <taxon>Murinae</taxon>
        <taxon>Mus</taxon>
        <taxon>Mus</taxon>
    </lineage>
</organism>
<proteinExistence type="evidence at protein level"/>
<reference key="1">
    <citation type="journal article" date="2004" name="FEBS Lett.">
        <title>Differential regulation of the insulin-like growth factor II mRNA-binding protein genes by architectural transcription factor HMGA2.</title>
        <authorList>
            <person name="Brants J.R."/>
            <person name="Ayoubi T.A.Y."/>
            <person name="Chada K."/>
            <person name="Marchal K."/>
            <person name="Van de Ven W.J.M."/>
            <person name="Petit M.M.R."/>
        </authorList>
    </citation>
    <scope>NUCLEOTIDE SEQUENCE [MRNA] (ISOFORM 1)</scope>
</reference>
<reference key="2">
    <citation type="journal article" date="2005" name="Science">
        <title>The transcriptional landscape of the mammalian genome.</title>
        <authorList>
            <person name="Carninci P."/>
            <person name="Kasukawa T."/>
            <person name="Katayama S."/>
            <person name="Gough J."/>
            <person name="Frith M.C."/>
            <person name="Maeda N."/>
            <person name="Oyama R."/>
            <person name="Ravasi T."/>
            <person name="Lenhard B."/>
            <person name="Wells C."/>
            <person name="Kodzius R."/>
            <person name="Shimokawa K."/>
            <person name="Bajic V.B."/>
            <person name="Brenner S.E."/>
            <person name="Batalov S."/>
            <person name="Forrest A.R."/>
            <person name="Zavolan M."/>
            <person name="Davis M.J."/>
            <person name="Wilming L.G."/>
            <person name="Aidinis V."/>
            <person name="Allen J.E."/>
            <person name="Ambesi-Impiombato A."/>
            <person name="Apweiler R."/>
            <person name="Aturaliya R.N."/>
            <person name="Bailey T.L."/>
            <person name="Bansal M."/>
            <person name="Baxter L."/>
            <person name="Beisel K.W."/>
            <person name="Bersano T."/>
            <person name="Bono H."/>
            <person name="Chalk A.M."/>
            <person name="Chiu K.P."/>
            <person name="Choudhary V."/>
            <person name="Christoffels A."/>
            <person name="Clutterbuck D.R."/>
            <person name="Crowe M.L."/>
            <person name="Dalla E."/>
            <person name="Dalrymple B.P."/>
            <person name="de Bono B."/>
            <person name="Della Gatta G."/>
            <person name="di Bernardo D."/>
            <person name="Down T."/>
            <person name="Engstrom P."/>
            <person name="Fagiolini M."/>
            <person name="Faulkner G."/>
            <person name="Fletcher C.F."/>
            <person name="Fukushima T."/>
            <person name="Furuno M."/>
            <person name="Futaki S."/>
            <person name="Gariboldi M."/>
            <person name="Georgii-Hemming P."/>
            <person name="Gingeras T.R."/>
            <person name="Gojobori T."/>
            <person name="Green R.E."/>
            <person name="Gustincich S."/>
            <person name="Harbers M."/>
            <person name="Hayashi Y."/>
            <person name="Hensch T.K."/>
            <person name="Hirokawa N."/>
            <person name="Hill D."/>
            <person name="Huminiecki L."/>
            <person name="Iacono M."/>
            <person name="Ikeo K."/>
            <person name="Iwama A."/>
            <person name="Ishikawa T."/>
            <person name="Jakt M."/>
            <person name="Kanapin A."/>
            <person name="Katoh M."/>
            <person name="Kawasawa Y."/>
            <person name="Kelso J."/>
            <person name="Kitamura H."/>
            <person name="Kitano H."/>
            <person name="Kollias G."/>
            <person name="Krishnan S.P."/>
            <person name="Kruger A."/>
            <person name="Kummerfeld S.K."/>
            <person name="Kurochkin I.V."/>
            <person name="Lareau L.F."/>
            <person name="Lazarevic D."/>
            <person name="Lipovich L."/>
            <person name="Liu J."/>
            <person name="Liuni S."/>
            <person name="McWilliam S."/>
            <person name="Madan Babu M."/>
            <person name="Madera M."/>
            <person name="Marchionni L."/>
            <person name="Matsuda H."/>
            <person name="Matsuzawa S."/>
            <person name="Miki H."/>
            <person name="Mignone F."/>
            <person name="Miyake S."/>
            <person name="Morris K."/>
            <person name="Mottagui-Tabar S."/>
            <person name="Mulder N."/>
            <person name="Nakano N."/>
            <person name="Nakauchi H."/>
            <person name="Ng P."/>
            <person name="Nilsson R."/>
            <person name="Nishiguchi S."/>
            <person name="Nishikawa S."/>
            <person name="Nori F."/>
            <person name="Ohara O."/>
            <person name="Okazaki Y."/>
            <person name="Orlando V."/>
            <person name="Pang K.C."/>
            <person name="Pavan W.J."/>
            <person name="Pavesi G."/>
            <person name="Pesole G."/>
            <person name="Petrovsky N."/>
            <person name="Piazza S."/>
            <person name="Reed J."/>
            <person name="Reid J.F."/>
            <person name="Ring B.Z."/>
            <person name="Ringwald M."/>
            <person name="Rost B."/>
            <person name="Ruan Y."/>
            <person name="Salzberg S.L."/>
            <person name="Sandelin A."/>
            <person name="Schneider C."/>
            <person name="Schoenbach C."/>
            <person name="Sekiguchi K."/>
            <person name="Semple C.A."/>
            <person name="Seno S."/>
            <person name="Sessa L."/>
            <person name="Sheng Y."/>
            <person name="Shibata Y."/>
            <person name="Shimada H."/>
            <person name="Shimada K."/>
            <person name="Silva D."/>
            <person name="Sinclair B."/>
            <person name="Sperling S."/>
            <person name="Stupka E."/>
            <person name="Sugiura K."/>
            <person name="Sultana R."/>
            <person name="Takenaka Y."/>
            <person name="Taki K."/>
            <person name="Tammoja K."/>
            <person name="Tan S.L."/>
            <person name="Tang S."/>
            <person name="Taylor M.S."/>
            <person name="Tegner J."/>
            <person name="Teichmann S.A."/>
            <person name="Ueda H.R."/>
            <person name="van Nimwegen E."/>
            <person name="Verardo R."/>
            <person name="Wei C.L."/>
            <person name="Yagi K."/>
            <person name="Yamanishi H."/>
            <person name="Zabarovsky E."/>
            <person name="Zhu S."/>
            <person name="Zimmer A."/>
            <person name="Hide W."/>
            <person name="Bult C."/>
            <person name="Grimmond S.M."/>
            <person name="Teasdale R.D."/>
            <person name="Liu E.T."/>
            <person name="Brusic V."/>
            <person name="Quackenbush J."/>
            <person name="Wahlestedt C."/>
            <person name="Mattick J.S."/>
            <person name="Hume D.A."/>
            <person name="Kai C."/>
            <person name="Sasaki D."/>
            <person name="Tomaru Y."/>
            <person name="Fukuda S."/>
            <person name="Kanamori-Katayama M."/>
            <person name="Suzuki M."/>
            <person name="Aoki J."/>
            <person name="Arakawa T."/>
            <person name="Iida J."/>
            <person name="Imamura K."/>
            <person name="Itoh M."/>
            <person name="Kato T."/>
            <person name="Kawaji H."/>
            <person name="Kawagashira N."/>
            <person name="Kawashima T."/>
            <person name="Kojima M."/>
            <person name="Kondo S."/>
            <person name="Konno H."/>
            <person name="Nakano K."/>
            <person name="Ninomiya N."/>
            <person name="Nishio T."/>
            <person name="Okada M."/>
            <person name="Plessy C."/>
            <person name="Shibata K."/>
            <person name="Shiraki T."/>
            <person name="Suzuki S."/>
            <person name="Tagami M."/>
            <person name="Waki K."/>
            <person name="Watahiki A."/>
            <person name="Okamura-Oho Y."/>
            <person name="Suzuki H."/>
            <person name="Kawai J."/>
            <person name="Hayashizaki Y."/>
        </authorList>
    </citation>
    <scope>NUCLEOTIDE SEQUENCE [LARGE SCALE MRNA] (ISOFORM 2)</scope>
    <source>
        <strain>NOD</strain>
        <tissue>Dendritic cell</tissue>
    </source>
</reference>
<reference key="3">
    <citation type="journal article" date="2009" name="PLoS Biol.">
        <title>Lineage-specific biology revealed by a finished genome assembly of the mouse.</title>
        <authorList>
            <person name="Church D.M."/>
            <person name="Goodstadt L."/>
            <person name="Hillier L.W."/>
            <person name="Zody M.C."/>
            <person name="Goldstein S."/>
            <person name="She X."/>
            <person name="Bult C.J."/>
            <person name="Agarwala R."/>
            <person name="Cherry J.L."/>
            <person name="DiCuccio M."/>
            <person name="Hlavina W."/>
            <person name="Kapustin Y."/>
            <person name="Meric P."/>
            <person name="Maglott D."/>
            <person name="Birtle Z."/>
            <person name="Marques A.C."/>
            <person name="Graves T."/>
            <person name="Zhou S."/>
            <person name="Teague B."/>
            <person name="Potamousis K."/>
            <person name="Churas C."/>
            <person name="Place M."/>
            <person name="Herschleb J."/>
            <person name="Runnheim R."/>
            <person name="Forrest D."/>
            <person name="Amos-Landgraf J."/>
            <person name="Schwartz D.C."/>
            <person name="Cheng Z."/>
            <person name="Lindblad-Toh K."/>
            <person name="Eichler E.E."/>
            <person name="Ponting C.P."/>
        </authorList>
    </citation>
    <scope>NUCLEOTIDE SEQUENCE [LARGE SCALE GENOMIC DNA]</scope>
    <source>
        <strain>C57BL/6J</strain>
    </source>
</reference>
<reference key="4">
    <citation type="journal article" date="2000" name="J. Biol. Chem.">
        <title>H19 RNA binds four molecules of insulin-like growth factor II mRNA-binding protein.</title>
        <authorList>
            <person name="Runge S."/>
            <person name="Nielsen F.C."/>
            <person name="Nielsen J."/>
            <person name="Lykke-Andersen J."/>
            <person name="Wewer U.M."/>
            <person name="Christiansen J."/>
        </authorList>
    </citation>
    <scope>DEVELOPMENTAL STAGE</scope>
</reference>
<reference key="5">
    <citation type="journal article" date="2005" name="Biol. Cell">
        <title>VICKZ proteins: a multi-talented family of regulatory RNA-binding proteins.</title>
        <authorList>
            <person name="Yisraeli J.K."/>
        </authorList>
    </citation>
    <scope>REVIEW</scope>
</reference>
<reference key="6">
    <citation type="journal article" date="2005" name="Reproduction">
        <title>Expression of IGF-II mRNA-binding proteins (IMPs) in gonads and testicular cancer.</title>
        <authorList>
            <person name="Hammer N.A."/>
            <person name="Hansen T.O."/>
            <person name="Byskov A.G."/>
            <person name="Rajpert-De Meyts E."/>
            <person name="Groendahl M.L."/>
            <person name="Bredkjaer H.E."/>
            <person name="Wewer U.M."/>
            <person name="Christiansen J."/>
            <person name="Nielsen F.C."/>
        </authorList>
    </citation>
    <scope>DEVELOPMENTAL STAGE</scope>
    <scope>TISSUE SPECIFICITY</scope>
</reference>
<reference key="7">
    <citation type="journal article" date="2009" name="Mol. Cell. Proteomics">
        <title>Large scale localization of protein phosphorylation by use of electron capture dissociation mass spectrometry.</title>
        <authorList>
            <person name="Sweet S.M."/>
            <person name="Bailey C.M."/>
            <person name="Cunningham D.L."/>
            <person name="Heath J.K."/>
            <person name="Cooper H.J."/>
        </authorList>
    </citation>
    <scope>PHOSPHORYLATION [LARGE SCALE ANALYSIS] AT SER-162 AND SER-164</scope>
    <scope>IDENTIFICATION BY MASS SPECTROMETRY [LARGE SCALE ANALYSIS]</scope>
    <source>
        <tissue>Embryonic fibroblast</tissue>
    </source>
</reference>
<reference key="8">
    <citation type="journal article" date="2010" name="Cell">
        <title>A tissue-specific atlas of mouse protein phosphorylation and expression.</title>
        <authorList>
            <person name="Huttlin E.L."/>
            <person name="Jedrychowski M.P."/>
            <person name="Elias J.E."/>
            <person name="Goswami T."/>
            <person name="Rad R."/>
            <person name="Beausoleil S.A."/>
            <person name="Villen J."/>
            <person name="Haas W."/>
            <person name="Sowa M.E."/>
            <person name="Gygi S.P."/>
        </authorList>
    </citation>
    <scope>PHOSPHORYLATION [LARGE SCALE ANALYSIS] AT SER-162; SER-164 AND THR-543</scope>
    <scope>IDENTIFICATION BY MASS SPECTROMETRY [LARGE SCALE ANALYSIS]</scope>
    <source>
        <tissue>Brown adipose tissue</tissue>
        <tissue>Heart</tissue>
        <tissue>Kidney</tissue>
    </source>
</reference>
<comment type="function">
    <text evidence="2">RNA-binding factor that recruits target transcripts to cytoplasmic protein-RNA complexes (mRNPs). This transcript 'caging' into mRNPs allows mRNA transport and transient storage. It also modulates the rate and location at which target transcripts encounter the translational apparatus and shields them from endonuclease attacks or microRNA-mediated degradation (By similarity). Preferentially binds to N6-methyladenosine (m6A)-containing mRNAs and increases their stability (By similarity). Binds to the 5'-UTR of the insulin-like growth factor 2 (IGF2) mRNAs. Binding is isoform-specific. Binds to beta-actin/ACTB and MYC transcripts (By similarity). Increases MYC mRNA stability by binding to the coding region instability determinant (CRD) and binding is enhanced by m6A-modification of the CRD (By similarity).</text>
</comment>
<comment type="subunit">
    <text evidence="2">Can form homooligomers and heterooligomers with IGF2BP1 and IGF2BP3 in an RNA-dependent manner. Interacts with HNRPD. Interacts with IGF2BP1. Interacts with ELAVL1, DHX9, HNRNPU, MATR3 and PABPC1.</text>
</comment>
<comment type="subcellular location">
    <subcellularLocation>
        <location evidence="1">Nucleus</location>
    </subcellularLocation>
    <subcellularLocation>
        <location evidence="1">Cytoplasm</location>
    </subcellularLocation>
    <subcellularLocation>
        <location evidence="2">Cytoplasm</location>
        <location evidence="2">P-body</location>
    </subcellularLocation>
    <subcellularLocation>
        <location evidence="2">Cytoplasm</location>
        <location evidence="2">Stress granule</location>
    </subcellularLocation>
    <text evidence="1">Localized in cytoplasmic mRNP granules containing untranslated mRNAs. Localizes at the connecting piece and the tail of the spermatozoa. In response to cellular stress, such as oxidative stress, recruited to stress granules (By similarity).</text>
</comment>
<comment type="alternative products">
    <event type="alternative splicing"/>
    <isoform>
        <id>Q5SF07-1</id>
        <name>1</name>
        <sequence type="displayed"/>
    </isoform>
    <isoform>
        <id>Q5SF07-2</id>
        <name>2</name>
        <sequence type="described" ref="VSP_019576"/>
    </isoform>
</comment>
<comment type="tissue specificity">
    <text evidence="7">Expressed in oocytes, granulosa cells of small and growing follicles and Leydig cells of the testis (at protein level). Expressed in testis and ovary.</text>
</comment>
<comment type="developmental stage">
    <text evidence="6 7">Expressed in zygotes and blastocysts (at protein level). Expressed in gonads at 12.5, 14.5 and 16.5 dpc (at protein level). Expressed during fetal development at 12.5, 14.5 and 17.5 dpc and declining towards birth.</text>
</comment>
<comment type="domain">
    <text evidence="2">Domains KH3 and KH4 are the major RNA-binding modules, although KH1 and KH2 may also contribute. The contribution to RNA-binding of individual KH domains may be target-specific. KH1 and KH2, and possibly KH3 and KH4, promote the formation of higher ordered protein-RNA complexes, which may be essential for IGF2BP1 cytoplasmic retention. KH domains are required for RNA-dependent homo- and heterooligomerization and for localization to stress granules.</text>
</comment>
<comment type="similarity">
    <text evidence="9">Belongs to the RRM IMP/VICKZ family.</text>
</comment>
<sequence length="592" mass="65584">MMNKLYIGNLSPAVTADDLRQLFGDRKLPLAGQVLLKSGYAFVDYPDQNWAIRAIETLSGKVELHGKIMEVDYSVSKKLRSRRIQIRNIPPHLQWEVLDGLLAEYGTVENVEQVNTDTETAVVNVTYMTREEAKLAIEKLSGHQFEDYSFKISYIPDEEVSSPSPPHRAREQGHGPGSSSQARQIDFPLRILVPTQFVGAIIGKEGLTIKNITKQTQSRVDIHRKENSGAAEKPVTIHATPEGTSEACRMILEIMQKEADETKLAEEVPLKILAHNGFVGRLIGKEGRNLKKIEHETGTKITISSLQDLSIYNPERTITVRGTIEACANAEIEIMKKLREAFENDMLAVNQQANLIPGLNLSALGIFSTGLSVLPPPAGPRGVPPSPPYHPFATHSGYFSSLYPHHHFGPFPHHHSYPEQETVSLFIPTQAVGAIIGKKGAHIKQLARFAGASIKIAPAEGPDVSERMVIITGPPEAQFKAQGRIFGKLKEENFFNPKEEVKLEAHIRVPSSTAGRVIGKGGKTVNELQNLTSAEVIVPRDQTPDENEEVIVRIIGHFFASQTAQRKIREIVQQVKQQEQRYPQGVAPQRSK</sequence>
<gene>
    <name type="primary">Igf2bp2</name>
    <name type="synonym">Imp2</name>
    <name type="synonym">Vickz2</name>
</gene>